<keyword id="KW-0007">Acetylation</keyword>
<keyword id="KW-0066">ATP synthesis</keyword>
<keyword id="KW-0138">CF(0)</keyword>
<keyword id="KW-0375">Hydrogen ion transport</keyword>
<keyword id="KW-0406">Ion transport</keyword>
<keyword id="KW-0472">Membrane</keyword>
<keyword id="KW-0496">Mitochondrion</keyword>
<keyword id="KW-0812">Transmembrane</keyword>
<keyword id="KW-1133">Transmembrane helix</keyword>
<keyword id="KW-0813">Transport</keyword>
<sequence length="68" mass="8044">MPQLNTTVWPTIITSMLLTLFLLMQLKTLNMYYHPPASPKLMNIKPHNNPWEHKWTKIYSLHSLPLQS</sequence>
<name>ATP8_SYMSY</name>
<dbReference type="EMBL" id="D38484">
    <property type="protein sequence ID" value="BAA07498.1"/>
    <property type="molecule type" value="Genomic_DNA"/>
</dbReference>
<dbReference type="PIR" id="I37051">
    <property type="entry name" value="I37051"/>
</dbReference>
<dbReference type="SMR" id="Q34801"/>
<dbReference type="GO" id="GO:0031966">
    <property type="term" value="C:mitochondrial membrane"/>
    <property type="evidence" value="ECO:0007669"/>
    <property type="project" value="UniProtKB-SubCell"/>
</dbReference>
<dbReference type="GO" id="GO:0045259">
    <property type="term" value="C:proton-transporting ATP synthase complex"/>
    <property type="evidence" value="ECO:0000250"/>
    <property type="project" value="UniProtKB"/>
</dbReference>
<dbReference type="GO" id="GO:0015078">
    <property type="term" value="F:proton transmembrane transporter activity"/>
    <property type="evidence" value="ECO:0007669"/>
    <property type="project" value="InterPro"/>
</dbReference>
<dbReference type="GO" id="GO:0015986">
    <property type="term" value="P:proton motive force-driven ATP synthesis"/>
    <property type="evidence" value="ECO:0007669"/>
    <property type="project" value="InterPro"/>
</dbReference>
<dbReference type="InterPro" id="IPR039017">
    <property type="entry name" value="ATP8_mammal"/>
</dbReference>
<dbReference type="InterPro" id="IPR001421">
    <property type="entry name" value="ATP8_metazoa"/>
</dbReference>
<dbReference type="PANTHER" id="PTHR13722">
    <property type="entry name" value="ATP SYNTHASE PROTEIN 8"/>
    <property type="match status" value="1"/>
</dbReference>
<dbReference type="PANTHER" id="PTHR13722:SF0">
    <property type="entry name" value="ATP SYNTHASE PROTEIN 8"/>
    <property type="match status" value="1"/>
</dbReference>
<dbReference type="Pfam" id="PF00895">
    <property type="entry name" value="ATP-synt_8"/>
    <property type="match status" value="1"/>
</dbReference>
<geneLocation type="mitochondrion"/>
<protein>
    <recommendedName>
        <fullName evidence="1">ATP synthase F(0) complex subunit 8</fullName>
    </recommendedName>
    <alternativeName>
        <fullName>A6L</fullName>
    </alternativeName>
    <alternativeName>
        <fullName>F-ATPase subunit 8</fullName>
    </alternativeName>
</protein>
<gene>
    <name evidence="1" type="primary">MT-ATP8</name>
    <name type="synonym">ATP8</name>
    <name type="synonym">ATPASE8</name>
    <name type="synonym">MTATP8</name>
</gene>
<comment type="function">
    <text evidence="1 3">Subunit 8, of the mitochondrial membrane ATP synthase complex (F(1)F(0) ATP synthase or Complex V) that produces ATP from ADP in the presence of a proton gradient across the membrane which is generated by electron transport complexes of the respiratory chain. ATP synthase complex consist of a soluble F(1) head domain - the catalytic core - and a membrane F(1) domain - the membrane proton channel. These two domains are linked by a central stalk rotating inside the F(1) region and a stationary peripheral stalk. During catalysis, ATP synthesis in the catalytic domain of F(1) is coupled via a rotary mechanism of the central stalk subunits to proton translocation (By similarity). In vivo, can only synthesize ATP although its ATP hydrolase activity can be activated artificially in vitro (By similarity). Part of the complex F(0) domain (By similarity).</text>
</comment>
<comment type="subunit">
    <text evidence="1">Component of the ATP synthase complex composed at least of ATP5F1A/subunit alpha, ATP5F1B/subunit beta, ATP5MC1/subunit c (homooctomer), MT-ATP6/subunit a, MT-ATP8/subunit 8, ATP5ME/subunit e, ATP5MF/subunit f, ATP5MG/subunit g, ATP5MK/subunit k, ATP5MJ/subunit j, ATP5F1C/subunit gamma, ATP5F1D/subunit delta, ATP5F1E/subunit epsilon, ATP5PF/subunit F6, ATP5PB/subunit b, ATP5PD/subunit d, ATP5PO/subunit OSCP. ATP synthase complex consists of a soluble F(1) head domain (subunits alpha(3) and beta(3)) - the catalytic core - and a membrane F(0) domain - the membrane proton channel (subunits c, a, 8, e, f, g, k and j). These two domains are linked by a central stalk (subunits gamma, delta, and epsilon) rotating inside the F1 region and a stationary peripheral stalk (subunits F6, b, d, and OSCP). Interacts with PRICKLE3.</text>
</comment>
<comment type="subcellular location">
    <subcellularLocation>
        <location>Mitochondrion membrane</location>
        <topology>Single-pass membrane protein</topology>
    </subcellularLocation>
</comment>
<comment type="similarity">
    <text evidence="5">Belongs to the ATPase protein 8 family.</text>
</comment>
<organism>
    <name type="scientific">Symphalangus syndactylus</name>
    <name type="common">Siamang</name>
    <name type="synonym">Hylobates syndactylus</name>
    <dbReference type="NCBI Taxonomy" id="9590"/>
    <lineage>
        <taxon>Eukaryota</taxon>
        <taxon>Metazoa</taxon>
        <taxon>Chordata</taxon>
        <taxon>Craniata</taxon>
        <taxon>Vertebrata</taxon>
        <taxon>Euteleostomi</taxon>
        <taxon>Mammalia</taxon>
        <taxon>Eutheria</taxon>
        <taxon>Euarchontoglires</taxon>
        <taxon>Primates</taxon>
        <taxon>Haplorrhini</taxon>
        <taxon>Catarrhini</taxon>
        <taxon>Hylobatidae</taxon>
        <taxon>Symphalangus</taxon>
    </lineage>
</organism>
<feature type="chain" id="PRO_0000195538" description="ATP synthase F(0) complex subunit 8">
    <location>
        <begin position="1"/>
        <end position="68"/>
    </location>
</feature>
<feature type="transmembrane region" description="Helical" evidence="4">
    <location>
        <begin position="8"/>
        <end position="24"/>
    </location>
</feature>
<feature type="modified residue" description="N6-acetyllysine; alternate" evidence="2">
    <location>
        <position position="54"/>
    </location>
</feature>
<feature type="modified residue" description="N6-succinyllysine; alternate" evidence="2">
    <location>
        <position position="54"/>
    </location>
</feature>
<feature type="modified residue" description="N6-acetyllysine" evidence="2">
    <location>
        <position position="57"/>
    </location>
</feature>
<evidence type="ECO:0000250" key="1">
    <source>
        <dbReference type="UniProtKB" id="P03928"/>
    </source>
</evidence>
<evidence type="ECO:0000250" key="2">
    <source>
        <dbReference type="UniProtKB" id="P03930"/>
    </source>
</evidence>
<evidence type="ECO:0000250" key="3">
    <source>
        <dbReference type="UniProtKB" id="P19483"/>
    </source>
</evidence>
<evidence type="ECO:0000255" key="4"/>
<evidence type="ECO:0000305" key="5"/>
<proteinExistence type="inferred from homology"/>
<reference key="1">
    <citation type="journal article" date="1992" name="J. Mol. Evol.">
        <title>Man's place in Hominoidea revealed by mitochondrial DNA genealogy.</title>
        <authorList>
            <person name="Horai S."/>
            <person name="Satta Y."/>
            <person name="Hayasaka K."/>
            <person name="Kondo R."/>
            <person name="Inoue T."/>
            <person name="Ishida T."/>
            <person name="Hayashi S."/>
            <person name="Takahata N."/>
        </authorList>
    </citation>
    <scope>NUCLEOTIDE SEQUENCE [GENOMIC DNA]</scope>
</reference>
<accession>Q34801</accession>